<evidence type="ECO:0000250" key="1"/>
<evidence type="ECO:0000255" key="2">
    <source>
        <dbReference type="PROSITE-ProRule" id="PRU10084"/>
    </source>
</evidence>
<evidence type="ECO:0000269" key="3">
    <source>
    </source>
</evidence>
<evidence type="ECO:0000305" key="4"/>
<dbReference type="EC" id="3.4.21.26"/>
<dbReference type="EMBL" id="AJ238018">
    <property type="protein sequence ID" value="CAB40787.1"/>
    <property type="molecule type" value="mRNA"/>
</dbReference>
<dbReference type="EMBL" id="AAFI02000012">
    <property type="protein sequence ID" value="EAL70086.1"/>
    <property type="molecule type" value="Genomic_DNA"/>
</dbReference>
<dbReference type="RefSeq" id="XP_644295.1">
    <property type="nucleotide sequence ID" value="XM_639203.1"/>
</dbReference>
<dbReference type="SMR" id="Q86AS5"/>
<dbReference type="FunCoup" id="Q86AS5">
    <property type="interactions" value="433"/>
</dbReference>
<dbReference type="STRING" id="44689.Q86AS5"/>
<dbReference type="ESTHER" id="dicdi-DPOA">
    <property type="family name" value="S9N_PPCE_Peptidase_S9"/>
</dbReference>
<dbReference type="MEROPS" id="S09.B02"/>
<dbReference type="PaxDb" id="44689-DDB0185041"/>
<dbReference type="EnsemblProtists" id="EAL70086">
    <property type="protein sequence ID" value="EAL70086"/>
    <property type="gene ID" value="DDB_G0274387"/>
</dbReference>
<dbReference type="GeneID" id="8619723"/>
<dbReference type="KEGG" id="ddi:DDB_G0274387"/>
<dbReference type="dictyBase" id="DDB_G0274387">
    <property type="gene designation" value="dpoA"/>
</dbReference>
<dbReference type="VEuPathDB" id="AmoebaDB:DDB_G0274387"/>
<dbReference type="eggNOG" id="KOG2237">
    <property type="taxonomic scope" value="Eukaryota"/>
</dbReference>
<dbReference type="HOGENOM" id="CLU_011290_1_1_1"/>
<dbReference type="InParanoid" id="Q86AS5"/>
<dbReference type="OMA" id="DGCKNAN"/>
<dbReference type="PhylomeDB" id="Q86AS5"/>
<dbReference type="PRO" id="PR:Q86AS5"/>
<dbReference type="Proteomes" id="UP000002195">
    <property type="component" value="Chromosome 2"/>
</dbReference>
<dbReference type="GO" id="GO:0005829">
    <property type="term" value="C:cytosol"/>
    <property type="evidence" value="ECO:0000314"/>
    <property type="project" value="dictyBase"/>
</dbReference>
<dbReference type="GO" id="GO:0070012">
    <property type="term" value="F:oligopeptidase activity"/>
    <property type="evidence" value="ECO:0000314"/>
    <property type="project" value="dictyBase"/>
</dbReference>
<dbReference type="GO" id="GO:0004252">
    <property type="term" value="F:serine-type endopeptidase activity"/>
    <property type="evidence" value="ECO:0007669"/>
    <property type="project" value="UniProtKB-EC"/>
</dbReference>
<dbReference type="GO" id="GO:0006508">
    <property type="term" value="P:proteolysis"/>
    <property type="evidence" value="ECO:0007669"/>
    <property type="project" value="UniProtKB-KW"/>
</dbReference>
<dbReference type="GO" id="GO:0010468">
    <property type="term" value="P:regulation of gene expression"/>
    <property type="evidence" value="ECO:0000315"/>
    <property type="project" value="dictyBase"/>
</dbReference>
<dbReference type="GO" id="GO:0009966">
    <property type="term" value="P:regulation of signal transduction"/>
    <property type="evidence" value="ECO:0000315"/>
    <property type="project" value="dictyBase"/>
</dbReference>
<dbReference type="GO" id="GO:0010226">
    <property type="term" value="P:response to lithium ion"/>
    <property type="evidence" value="ECO:0000315"/>
    <property type="project" value="dictyBase"/>
</dbReference>
<dbReference type="FunFam" id="2.130.10.120:FF:000015">
    <property type="entry name" value="Prolyl endopeptidase"/>
    <property type="match status" value="1"/>
</dbReference>
<dbReference type="FunFam" id="3.40.50.1820:FF:000005">
    <property type="entry name" value="Prolyl endopeptidase"/>
    <property type="match status" value="1"/>
</dbReference>
<dbReference type="Gene3D" id="3.40.50.1820">
    <property type="entry name" value="alpha/beta hydrolase"/>
    <property type="match status" value="1"/>
</dbReference>
<dbReference type="Gene3D" id="2.130.10.120">
    <property type="entry name" value="Prolyl oligopeptidase, N-terminal domain"/>
    <property type="match status" value="1"/>
</dbReference>
<dbReference type="InterPro" id="IPR029058">
    <property type="entry name" value="AB_hydrolase_fold"/>
</dbReference>
<dbReference type="InterPro" id="IPR002471">
    <property type="entry name" value="Pept_S9_AS"/>
</dbReference>
<dbReference type="InterPro" id="IPR023302">
    <property type="entry name" value="Pept_S9A_N"/>
</dbReference>
<dbReference type="InterPro" id="IPR001375">
    <property type="entry name" value="Peptidase_S9_cat"/>
</dbReference>
<dbReference type="InterPro" id="IPR002470">
    <property type="entry name" value="Peptidase_S9A"/>
</dbReference>
<dbReference type="InterPro" id="IPR051167">
    <property type="entry name" value="Prolyl_oligopep/macrocyclase"/>
</dbReference>
<dbReference type="PANTHER" id="PTHR42881">
    <property type="entry name" value="PROLYL ENDOPEPTIDASE"/>
    <property type="match status" value="1"/>
</dbReference>
<dbReference type="PANTHER" id="PTHR42881:SF2">
    <property type="entry name" value="PROLYL ENDOPEPTIDASE"/>
    <property type="match status" value="1"/>
</dbReference>
<dbReference type="Pfam" id="PF00326">
    <property type="entry name" value="Peptidase_S9"/>
    <property type="match status" value="1"/>
</dbReference>
<dbReference type="Pfam" id="PF02897">
    <property type="entry name" value="Peptidase_S9_N"/>
    <property type="match status" value="1"/>
</dbReference>
<dbReference type="PRINTS" id="PR00862">
    <property type="entry name" value="PROLIGOPTASE"/>
</dbReference>
<dbReference type="SUPFAM" id="SSF53474">
    <property type="entry name" value="alpha/beta-Hydrolases"/>
    <property type="match status" value="1"/>
</dbReference>
<dbReference type="SUPFAM" id="SSF50993">
    <property type="entry name" value="Peptidase/esterase 'gauge' domain"/>
    <property type="match status" value="1"/>
</dbReference>
<dbReference type="PROSITE" id="PS00708">
    <property type="entry name" value="PRO_ENDOPEP_SER"/>
    <property type="match status" value="1"/>
</dbReference>
<accession>Q86AS5</accession>
<accession>Q554M8</accession>
<accession>Q9XZR9</accession>
<proteinExistence type="evidence at protein level"/>
<reference key="1">
    <citation type="journal article" date="1999" name="EMBO J.">
        <title>Loss of a prolyl oligopeptidase confers resistance to lithium by elevation of inositol (1,4,5) trisphosphate.</title>
        <authorList>
            <person name="Williams R.S.B."/>
            <person name="Eames M."/>
            <person name="Ryves W.J."/>
            <person name="Viggars J."/>
            <person name="Harwood A.J."/>
        </authorList>
    </citation>
    <scope>NUCLEOTIDE SEQUENCE [GENOMIC DNA]</scope>
    <scope>SUBCELLULAR LOCATION</scope>
    <scope>ACTIVITY REGULATION</scope>
    <scope>BIOPHYSICOCHEMICAL PROPERTIES</scope>
    <scope>DISRUPTION PHENOTYPE</scope>
</reference>
<reference key="2">
    <citation type="journal article" date="2002" name="Nature">
        <title>Sequence and analysis of chromosome 2 of Dictyostelium discoideum.</title>
        <authorList>
            <person name="Gloeckner G."/>
            <person name="Eichinger L."/>
            <person name="Szafranski K."/>
            <person name="Pachebat J.A."/>
            <person name="Bankier A.T."/>
            <person name="Dear P.H."/>
            <person name="Lehmann R."/>
            <person name="Baumgart C."/>
            <person name="Parra G."/>
            <person name="Abril J.F."/>
            <person name="Guigo R."/>
            <person name="Kumpf K."/>
            <person name="Tunggal B."/>
            <person name="Cox E.C."/>
            <person name="Quail M.A."/>
            <person name="Platzer M."/>
            <person name="Rosenthal A."/>
            <person name="Noegel A.A."/>
        </authorList>
    </citation>
    <scope>NUCLEOTIDE SEQUENCE [LARGE SCALE GENOMIC DNA]</scope>
    <source>
        <strain>AX4</strain>
    </source>
</reference>
<reference key="3">
    <citation type="journal article" date="2005" name="Nature">
        <title>The genome of the social amoeba Dictyostelium discoideum.</title>
        <authorList>
            <person name="Eichinger L."/>
            <person name="Pachebat J.A."/>
            <person name="Gloeckner G."/>
            <person name="Rajandream M.A."/>
            <person name="Sucgang R."/>
            <person name="Berriman M."/>
            <person name="Song J."/>
            <person name="Olsen R."/>
            <person name="Szafranski K."/>
            <person name="Xu Q."/>
            <person name="Tunggal B."/>
            <person name="Kummerfeld S."/>
            <person name="Madera M."/>
            <person name="Konfortov B.A."/>
            <person name="Rivero F."/>
            <person name="Bankier A.T."/>
            <person name="Lehmann R."/>
            <person name="Hamlin N."/>
            <person name="Davies R."/>
            <person name="Gaudet P."/>
            <person name="Fey P."/>
            <person name="Pilcher K."/>
            <person name="Chen G."/>
            <person name="Saunders D."/>
            <person name="Sodergren E.J."/>
            <person name="Davis P."/>
            <person name="Kerhornou A."/>
            <person name="Nie X."/>
            <person name="Hall N."/>
            <person name="Anjard C."/>
            <person name="Hemphill L."/>
            <person name="Bason N."/>
            <person name="Farbrother P."/>
            <person name="Desany B."/>
            <person name="Just E."/>
            <person name="Morio T."/>
            <person name="Rost R."/>
            <person name="Churcher C.M."/>
            <person name="Cooper J."/>
            <person name="Haydock S."/>
            <person name="van Driessche N."/>
            <person name="Cronin A."/>
            <person name="Goodhead I."/>
            <person name="Muzny D.M."/>
            <person name="Mourier T."/>
            <person name="Pain A."/>
            <person name="Lu M."/>
            <person name="Harper D."/>
            <person name="Lindsay R."/>
            <person name="Hauser H."/>
            <person name="James K.D."/>
            <person name="Quiles M."/>
            <person name="Madan Babu M."/>
            <person name="Saito T."/>
            <person name="Buchrieser C."/>
            <person name="Wardroper A."/>
            <person name="Felder M."/>
            <person name="Thangavelu M."/>
            <person name="Johnson D."/>
            <person name="Knights A."/>
            <person name="Loulseged H."/>
            <person name="Mungall K.L."/>
            <person name="Oliver K."/>
            <person name="Price C."/>
            <person name="Quail M.A."/>
            <person name="Urushihara H."/>
            <person name="Hernandez J."/>
            <person name="Rabbinowitsch E."/>
            <person name="Steffen D."/>
            <person name="Sanders M."/>
            <person name="Ma J."/>
            <person name="Kohara Y."/>
            <person name="Sharp S."/>
            <person name="Simmonds M.N."/>
            <person name="Spiegler S."/>
            <person name="Tivey A."/>
            <person name="Sugano S."/>
            <person name="White B."/>
            <person name="Walker D."/>
            <person name="Woodward J.R."/>
            <person name="Winckler T."/>
            <person name="Tanaka Y."/>
            <person name="Shaulsky G."/>
            <person name="Schleicher M."/>
            <person name="Weinstock G.M."/>
            <person name="Rosenthal A."/>
            <person name="Cox E.C."/>
            <person name="Chisholm R.L."/>
            <person name="Gibbs R.A."/>
            <person name="Loomis W.F."/>
            <person name="Platzer M."/>
            <person name="Kay R.R."/>
            <person name="Williams J.G."/>
            <person name="Dear P.H."/>
            <person name="Noegel A.A."/>
            <person name="Barrell B.G."/>
            <person name="Kuspa A."/>
        </authorList>
    </citation>
    <scope>NUCLEOTIDE SEQUENCE [LARGE SCALE GENOMIC DNA]</scope>
    <source>
        <strain>AX4</strain>
    </source>
</reference>
<comment type="function">
    <text evidence="1">Cleaves peptide bonds on the C-terminal side of prolyl residues within peptides that are up to approximately 30 amino acids long.</text>
</comment>
<comment type="catalytic activity">
    <reaction>
        <text>Hydrolysis of Pro-|-Xaa &gt;&gt; Ala-|-Xaa in oligopeptides.</text>
        <dbReference type="EC" id="3.4.21.26"/>
    </reaction>
</comment>
<comment type="activity regulation">
    <text evidence="3">Inhibited by chymostatin, Boc-Glu(NHO-Bz)-Pyrrolidide, Z-Pro-L-prolinal dimethyacetal and the peptide H-H-L-P-P-P-V-OH.</text>
</comment>
<comment type="biophysicochemical properties">
    <kinetics>
        <KM evidence="3">115 uM for carbobenzoxy-Gly-Pro-p-nitroanilide (at 37 degrees Celsius)</KM>
    </kinetics>
</comment>
<comment type="subcellular location">
    <subcellularLocation>
        <location evidence="3">Cytoplasm</location>
    </subcellularLocation>
</comment>
<comment type="disruption phenotype">
    <text evidence="3">Resistance to lithium due to elevation of inositol (1,4,5) trisphosphate.</text>
</comment>
<comment type="similarity">
    <text evidence="4">Belongs to the peptidase S9A family.</text>
</comment>
<protein>
    <recommendedName>
        <fullName>Prolyl endopeptidase</fullName>
        <shortName>PE</shortName>
        <ecNumber>3.4.21.26</ecNumber>
    </recommendedName>
    <alternativeName>
        <fullName>POase</fullName>
    </alternativeName>
    <alternativeName>
        <fullName>Post-proline cleaving enzyme</fullName>
    </alternativeName>
</protein>
<organism>
    <name type="scientific">Dictyostelium discoideum</name>
    <name type="common">Social amoeba</name>
    <dbReference type="NCBI Taxonomy" id="44689"/>
    <lineage>
        <taxon>Eukaryota</taxon>
        <taxon>Amoebozoa</taxon>
        <taxon>Evosea</taxon>
        <taxon>Eumycetozoa</taxon>
        <taxon>Dictyostelia</taxon>
        <taxon>Dictyosteliales</taxon>
        <taxon>Dictyosteliaceae</taxon>
        <taxon>Dictyostelium</taxon>
    </lineage>
</organism>
<name>PPCE_DICDI</name>
<feature type="chain" id="PRO_0000327836" description="Prolyl endopeptidase">
    <location>
        <begin position="1"/>
        <end position="760"/>
    </location>
</feature>
<feature type="active site" description="Charge relay system" evidence="2">
    <location>
        <position position="609"/>
    </location>
</feature>
<feature type="active site" description="Charge relay system" evidence="2">
    <location>
        <position position="693"/>
    </location>
</feature>
<feature type="active site" description="Charge relay system" evidence="2">
    <location>
        <position position="730"/>
    </location>
</feature>
<feature type="sequence conflict" description="In Ref. 1; CAB40787." evidence="4" ref="1">
    <original>E</original>
    <variation>R</variation>
    <location>
        <position position="42"/>
    </location>
</feature>
<feature type="sequence conflict" description="In Ref. 1; CAB40787." evidence="4" ref="1">
    <original>Q</original>
    <variation>P</variation>
    <location>
        <position position="402"/>
    </location>
</feature>
<feature type="sequence conflict" description="In Ref. 1; CAB40787." evidence="4" ref="1">
    <original>QNK</original>
    <variation>PNQ</variation>
    <location>
        <begin position="600"/>
        <end position="602"/>
    </location>
</feature>
<feature type="sequence conflict" description="In Ref. 1; CAB40787." evidence="4" ref="1">
    <original>D</original>
    <variation>E</variation>
    <location>
        <position position="664"/>
    </location>
</feature>
<feature type="sequence conflict" description="In Ref. 1; CAB40787." evidence="4" ref="1">
    <original>Q</original>
    <variation>P</variation>
    <location>
        <position position="681"/>
    </location>
</feature>
<feature type="sequence conflict" description="In Ref. 1; CAB40787." evidence="4" ref="1">
    <original>Q</original>
    <variation>P</variation>
    <location>
        <position position="739"/>
    </location>
</feature>
<sequence>MKFNYPETRRDDSVFDIFKSTEKGSVKVYDPYRHLEDQQSPETKKWVDEENKITRSFLDQDNTSEKISNEIMKMLNFERFDWFRRRGSKLFFSRNPNTLNQNIIYLIDIDQISISKDGKSSAKGFENAIEFLNPNTYSKDGTWSLKSFVISKSGDHVCFSYSKAGSDWEEIAVKKIITTNELKTNKDDEEEKEDLKKKNCLHYAVVDLPDSINWCKFTSIKWDENETGFIYNRYPKPEKVSDDDKGTETDTNLNNKVYYHKLGDANESFDRVVFECPENPQWIFGTEFSHDHSSLFISAFRDCNVEHNLYVIRNFQEAIANKSAFKVEALIDNFDACYYYITNTKQGEYFFLTNLSAPFNRLISIQLNDDQPIVPNSKSKLEFKEIIPEKDYVLESVSRSSQEKFYVSYQKHVQDIIEVYDFNGKYLKDIKLPGPGSASLSATEYHDHIFINFSNLVSPSVTYYMDSKNDELLLFKEPHIEGFKSSDYECKQVFYESPKDKTKIPMFIAYKKTTDITSGNAPTYMTGYGGFNISYTQSFSIRNIYFLNKFNGIFVIANIRGGGEYGKAWHEAGSKKNKQNCFDDFIGAAEYLIKENYTNQNKLAVRGGSNGGLLMGAISNQRPDLFKCVVADVGVMDMLRFHLHTIGSNWVSDYGRSDNPDDFDVLIKYSPLNNVPKDSNQYPSIMLCTGDHDDRVIPAHSYKFISELQYQLGKKVDTPLLIRVDKDSGHGAGKGLSKQNNEIADIFNFFSKVLNVKLNF</sequence>
<keyword id="KW-0963">Cytoplasm</keyword>
<keyword id="KW-0378">Hydrolase</keyword>
<keyword id="KW-0645">Protease</keyword>
<keyword id="KW-1185">Reference proteome</keyword>
<keyword id="KW-0720">Serine protease</keyword>
<gene>
    <name type="primary">prep</name>
    <name type="synonym">dpoA</name>
    <name type="ORF">DDB_G0274387</name>
</gene>